<name>MSX2_PANTR</name>
<proteinExistence type="inferred from homology"/>
<accession>A2T764</accession>
<protein>
    <recommendedName>
        <fullName>Homeobox protein MSX-2</fullName>
    </recommendedName>
</protein>
<dbReference type="EMBL" id="DQ977381">
    <property type="protein sequence ID" value="ABM92019.1"/>
    <property type="molecule type" value="Genomic_DNA"/>
</dbReference>
<dbReference type="STRING" id="9598.ENSPTRP00000029971"/>
<dbReference type="PaxDb" id="9598-ENSPTRP00000029971"/>
<dbReference type="eggNOG" id="KOG0492">
    <property type="taxonomic scope" value="Eukaryota"/>
</dbReference>
<dbReference type="InParanoid" id="A2T764"/>
<dbReference type="Proteomes" id="UP000002277">
    <property type="component" value="Unplaced"/>
</dbReference>
<dbReference type="GO" id="GO:0005634">
    <property type="term" value="C:nucleus"/>
    <property type="evidence" value="ECO:0000318"/>
    <property type="project" value="GO_Central"/>
</dbReference>
<dbReference type="GO" id="GO:0000981">
    <property type="term" value="F:DNA-binding transcription factor activity, RNA polymerase II-specific"/>
    <property type="evidence" value="ECO:0000318"/>
    <property type="project" value="GO_Central"/>
</dbReference>
<dbReference type="GO" id="GO:0000977">
    <property type="term" value="F:RNA polymerase II transcription regulatory region sequence-specific DNA binding"/>
    <property type="evidence" value="ECO:0000318"/>
    <property type="project" value="GO_Central"/>
</dbReference>
<dbReference type="GO" id="GO:0000976">
    <property type="term" value="F:transcription cis-regulatory region binding"/>
    <property type="evidence" value="ECO:0000250"/>
    <property type="project" value="UniProtKB"/>
</dbReference>
<dbReference type="GO" id="GO:0048598">
    <property type="term" value="P:embryonic morphogenesis"/>
    <property type="evidence" value="ECO:0000318"/>
    <property type="project" value="GO_Central"/>
</dbReference>
<dbReference type="GO" id="GO:0045892">
    <property type="term" value="P:negative regulation of DNA-templated transcription"/>
    <property type="evidence" value="ECO:0000250"/>
    <property type="project" value="UniProtKB"/>
</dbReference>
<dbReference type="GO" id="GO:0001649">
    <property type="term" value="P:osteoblast differentiation"/>
    <property type="evidence" value="ECO:0000250"/>
    <property type="project" value="UniProtKB"/>
</dbReference>
<dbReference type="GO" id="GO:0006357">
    <property type="term" value="P:regulation of transcription by RNA polymerase II"/>
    <property type="evidence" value="ECO:0000318"/>
    <property type="project" value="GO_Central"/>
</dbReference>
<dbReference type="CDD" id="cd00086">
    <property type="entry name" value="homeodomain"/>
    <property type="match status" value="1"/>
</dbReference>
<dbReference type="FunFam" id="1.10.10.60:FF:000134">
    <property type="entry name" value="Homeobox protein MSX-1"/>
    <property type="match status" value="1"/>
</dbReference>
<dbReference type="Gene3D" id="1.10.10.60">
    <property type="entry name" value="Homeodomain-like"/>
    <property type="match status" value="1"/>
</dbReference>
<dbReference type="InterPro" id="IPR001356">
    <property type="entry name" value="HD"/>
</dbReference>
<dbReference type="InterPro" id="IPR020479">
    <property type="entry name" value="HD_metazoa"/>
</dbReference>
<dbReference type="InterPro" id="IPR017970">
    <property type="entry name" value="Homeobox_CS"/>
</dbReference>
<dbReference type="InterPro" id="IPR009057">
    <property type="entry name" value="Homeodomain-like_sf"/>
</dbReference>
<dbReference type="InterPro" id="IPR050674">
    <property type="entry name" value="Msh_Homeobox_Regulators"/>
</dbReference>
<dbReference type="PANTHER" id="PTHR24338">
    <property type="entry name" value="HOMEOBOX PROTEIN MSX"/>
    <property type="match status" value="1"/>
</dbReference>
<dbReference type="PANTHER" id="PTHR24338:SF10">
    <property type="entry name" value="HOMEOBOX PROTEIN MSX-2"/>
    <property type="match status" value="1"/>
</dbReference>
<dbReference type="Pfam" id="PF00046">
    <property type="entry name" value="Homeodomain"/>
    <property type="match status" value="1"/>
</dbReference>
<dbReference type="PRINTS" id="PR00024">
    <property type="entry name" value="HOMEOBOX"/>
</dbReference>
<dbReference type="SMART" id="SM00389">
    <property type="entry name" value="HOX"/>
    <property type="match status" value="1"/>
</dbReference>
<dbReference type="SUPFAM" id="SSF46689">
    <property type="entry name" value="Homeodomain-like"/>
    <property type="match status" value="1"/>
</dbReference>
<dbReference type="PROSITE" id="PS00027">
    <property type="entry name" value="HOMEOBOX_1"/>
    <property type="match status" value="1"/>
</dbReference>
<dbReference type="PROSITE" id="PS50071">
    <property type="entry name" value="HOMEOBOX_2"/>
    <property type="match status" value="1"/>
</dbReference>
<comment type="function">
    <text evidence="1">Acts as a transcriptional regulator in bone development. Represses the ALPL promoter activity and antagonizes the stimulatory effect of DLX5 on ALPL expression during osteoblast differentiation. Probable morphogenetic role. May play a role in limb-pattern formation. In osteoblasts, suppresses transcription driven by the osteocalcin FGF response element (OCFRE). Binds to the homeodomain-response element of the ALPL promoter (By similarity).</text>
</comment>
<comment type="subcellular location">
    <subcellularLocation>
        <location evidence="2">Nucleus</location>
    </subcellularLocation>
</comment>
<comment type="similarity">
    <text evidence="4">Belongs to the Msh homeobox family.</text>
</comment>
<sequence>MASPSKGNDLFSPDEEGPAVVAGPGPGPGGAEGAAEERRVKVSSLPFSVEALMSDKKPPKEASPLPAESASAGATLRPLLLSGHGAREAHSPGPLVKPFETASVKSENSEDGAAWMQEPGRYSPPPRHMSPTTCTLRKHKTNRKPRXXFTTSQLLALERKFRQKQYLSIAERAEFSSSLNLTETQVKIWFQNRRAKAKRLQEAELEKLKMAAKPMLPSSFSLPFPISSPLQAASIYGASYPFHRPVLPIPPVGLYATPVGYGMYHLS</sequence>
<evidence type="ECO:0000250" key="1"/>
<evidence type="ECO:0000255" key="2">
    <source>
        <dbReference type="PROSITE-ProRule" id="PRU00108"/>
    </source>
</evidence>
<evidence type="ECO:0000256" key="3">
    <source>
        <dbReference type="SAM" id="MobiDB-lite"/>
    </source>
</evidence>
<evidence type="ECO:0000305" key="4"/>
<reference key="1">
    <citation type="submission" date="2006-08" db="EMBL/GenBank/DDBJ databases">
        <title>Positive selection in transcription factor genes on the human lineage.</title>
        <authorList>
            <person name="Nickel G.C."/>
            <person name="Tefft D.L."/>
            <person name="Trevarthen K."/>
            <person name="Funt J."/>
            <person name="Adams M.D."/>
        </authorList>
    </citation>
    <scope>NUCLEOTIDE SEQUENCE [GENOMIC DNA]</scope>
</reference>
<organism>
    <name type="scientific">Pan troglodytes</name>
    <name type="common">Chimpanzee</name>
    <dbReference type="NCBI Taxonomy" id="9598"/>
    <lineage>
        <taxon>Eukaryota</taxon>
        <taxon>Metazoa</taxon>
        <taxon>Chordata</taxon>
        <taxon>Craniata</taxon>
        <taxon>Vertebrata</taxon>
        <taxon>Euteleostomi</taxon>
        <taxon>Mammalia</taxon>
        <taxon>Eutheria</taxon>
        <taxon>Euarchontoglires</taxon>
        <taxon>Primates</taxon>
        <taxon>Haplorrhini</taxon>
        <taxon>Catarrhini</taxon>
        <taxon>Hominidae</taxon>
        <taxon>Pan</taxon>
    </lineage>
</organism>
<feature type="chain" id="PRO_0000285451" description="Homeobox protein MSX-2">
    <location>
        <begin position="1"/>
        <end position="267"/>
    </location>
</feature>
<feature type="DNA-binding region" description="Homeobox" evidence="2">
    <location>
        <begin position="142"/>
        <end position="201"/>
    </location>
</feature>
<feature type="region of interest" description="Disordered" evidence="3">
    <location>
        <begin position="1"/>
        <end position="71"/>
    </location>
</feature>
<feature type="compositionally biased region" description="Low complexity" evidence="3">
    <location>
        <begin position="62"/>
        <end position="71"/>
    </location>
</feature>
<keyword id="KW-0217">Developmental protein</keyword>
<keyword id="KW-0238">DNA-binding</keyword>
<keyword id="KW-0371">Homeobox</keyword>
<keyword id="KW-0539">Nucleus</keyword>
<keyword id="KW-0892">Osteogenesis</keyword>
<keyword id="KW-1185">Reference proteome</keyword>
<keyword id="KW-0678">Repressor</keyword>
<keyword id="KW-0804">Transcription</keyword>
<keyword id="KW-0805">Transcription regulation</keyword>
<gene>
    <name type="primary">MSX2</name>
</gene>